<organism>
    <name type="scientific">Mus musculus</name>
    <name type="common">Mouse</name>
    <dbReference type="NCBI Taxonomy" id="10090"/>
    <lineage>
        <taxon>Eukaryota</taxon>
        <taxon>Metazoa</taxon>
        <taxon>Chordata</taxon>
        <taxon>Craniata</taxon>
        <taxon>Vertebrata</taxon>
        <taxon>Euteleostomi</taxon>
        <taxon>Mammalia</taxon>
        <taxon>Eutheria</taxon>
        <taxon>Euarchontoglires</taxon>
        <taxon>Glires</taxon>
        <taxon>Rodentia</taxon>
        <taxon>Myomorpha</taxon>
        <taxon>Muroidea</taxon>
        <taxon>Muridae</taxon>
        <taxon>Murinae</taxon>
        <taxon>Mus</taxon>
        <taxon>Mus</taxon>
    </lineage>
</organism>
<comment type="function">
    <text>Involved in the association of MHC class I with transporter associated with antigen processing (TAP) and in the assembly of MHC class I with peptide (peptide loading).</text>
</comment>
<comment type="subunit">
    <text evidence="2">Heterodimer with PDIA3; disulfide-linked. Obligatory mediator for the interaction between newly assembled MHC class I molecules, calreticulin, PDIA3 and TAP. Up to 4 MHC class I/tapasin complexes bind to 1 TAP. Interacts with HLA-G-B2M complex; this interaction is required for loading of high affinity peptides. On its own or as part of MHC class I peptide loading complex, interacts with ligand-free MR1 or MR1-B2M complex, providing for stable MR1 pools ready for metabolite antigen processing.</text>
</comment>
<comment type="subcellular location">
    <subcellularLocation>
        <location evidence="5">Endoplasmic reticulum membrane</location>
        <topology evidence="5">Single-pass type I membrane protein</topology>
    </subcellularLocation>
</comment>
<comment type="alternative products">
    <event type="alternative splicing"/>
    <isoform>
        <id>Q9R233-1</id>
        <name>Long</name>
        <sequence type="displayed"/>
    </isoform>
    <isoform>
        <id>Q9R233-2</id>
        <name>Short</name>
        <sequence type="described" ref="VSP_002578"/>
    </isoform>
</comment>
<comment type="domain">
    <text evidence="1">The N-terminus is required for efficient association with MHC class I molecule and for a stable interaction between MHC I and calreticulin. Binding to TAP is mediated by the C-terminal region (By similarity).</text>
</comment>
<feature type="signal peptide" evidence="1">
    <location>
        <begin position="1"/>
        <end position="23"/>
    </location>
</feature>
<feature type="chain" id="PRO_0000014991" description="Tapasin">
    <location>
        <begin position="24"/>
        <end position="465"/>
    </location>
</feature>
<feature type="topological domain" description="Lumenal" evidence="3">
    <location>
        <begin position="24"/>
        <end position="416"/>
    </location>
</feature>
<feature type="transmembrane region" description="Helical" evidence="3">
    <location>
        <begin position="417"/>
        <end position="437"/>
    </location>
</feature>
<feature type="topological domain" description="Cytoplasmic" evidence="3">
    <location>
        <begin position="438"/>
        <end position="465"/>
    </location>
</feature>
<feature type="domain" description="Ig-like C1-type">
    <location>
        <begin position="295"/>
        <end position="402"/>
    </location>
</feature>
<feature type="site" description="May be involved in interaction with TAP">
    <location>
        <position position="431"/>
    </location>
</feature>
<feature type="glycosylation site" description="N-linked (GlcNAc...) asparagine" evidence="3">
    <location>
        <position position="256"/>
    </location>
</feature>
<feature type="disulfide bond" evidence="4">
    <location>
        <begin position="30"/>
        <end position="94"/>
    </location>
</feature>
<feature type="disulfide bond" description="Interchain (with C-57 in PDIA3)" evidence="4">
    <location>
        <position position="118"/>
    </location>
</feature>
<feature type="disulfide bond" evidence="4">
    <location>
        <begin position="318"/>
        <end position="385"/>
    </location>
</feature>
<feature type="splice variant" id="VSP_002578" description="In isoform Short." evidence="5">
    <location>
        <begin position="407"/>
        <end position="436"/>
    </location>
</feature>
<feature type="sequence conflict" description="In Ref. 3; AAC61676." evidence="5" ref="3">
    <original>V</original>
    <variation>F</variation>
    <location>
        <position position="17"/>
    </location>
</feature>
<feature type="sequence conflict" description="In Ref. 3; AAC61676." evidence="5" ref="3">
    <original>A</original>
    <variation>G</variation>
    <location>
        <position position="274"/>
    </location>
</feature>
<feature type="sequence conflict" description="In Ref. 3; AAC61676." evidence="5" ref="3">
    <original>A</original>
    <variation>G</variation>
    <location>
        <position position="294"/>
    </location>
</feature>
<feature type="sequence conflict" description="In Ref. 1; AAD17964." evidence="5" ref="1">
    <original>A</original>
    <variation>S</variation>
    <location>
        <position position="326"/>
    </location>
</feature>
<dbReference type="EMBL" id="AF106278">
    <property type="protein sequence ID" value="AAD17964.1"/>
    <property type="molecule type" value="mRNA"/>
</dbReference>
<dbReference type="EMBL" id="AF110520">
    <property type="protein sequence ID" value="AAC97973.1"/>
    <property type="molecule type" value="Genomic_DNA"/>
</dbReference>
<dbReference type="EMBL" id="AF100956">
    <property type="protein sequence ID" value="AAC69893.1"/>
    <property type="molecule type" value="Genomic_DNA"/>
</dbReference>
<dbReference type="EMBL" id="AF043943">
    <property type="protein sequence ID" value="AAC61676.1"/>
    <property type="molecule type" value="mRNA"/>
</dbReference>
<dbReference type="EMBL" id="AJ316612">
    <property type="protein sequence ID" value="CAC69993.1"/>
    <property type="molecule type" value="Genomic_DNA"/>
</dbReference>
<dbReference type="EMBL" id="AJ316613">
    <property type="protein sequence ID" value="CAC70721.2"/>
    <property type="molecule type" value="mRNA"/>
</dbReference>
<dbReference type="CCDS" id="CCDS89072.1">
    <molecule id="Q9R233-1"/>
</dbReference>
<dbReference type="RefSeq" id="NP_033344.1">
    <molecule id="Q9R233-1"/>
    <property type="nucleotide sequence ID" value="NM_009318.2"/>
</dbReference>
<dbReference type="PDB" id="6GB7">
    <property type="method" value="X-ray"/>
    <property type="resolution" value="2.15 A"/>
    <property type="chains" value="P/R=34-43"/>
</dbReference>
<dbReference type="PDBsum" id="6GB7"/>
<dbReference type="SMR" id="Q9R233"/>
<dbReference type="BioGRID" id="203968">
    <property type="interactions" value="9"/>
</dbReference>
<dbReference type="ComplexPortal" id="CPX-531">
    <property type="entry name" value="Tapasin-ERp57 complex"/>
</dbReference>
<dbReference type="FunCoup" id="Q9R233">
    <property type="interactions" value="602"/>
</dbReference>
<dbReference type="IntAct" id="Q9R233">
    <property type="interactions" value="1"/>
</dbReference>
<dbReference type="STRING" id="10090.ENSMUSP00000025161"/>
<dbReference type="GlyCosmos" id="Q9R233">
    <property type="glycosylation" value="1 site, No reported glycans"/>
</dbReference>
<dbReference type="GlyGen" id="Q9R233">
    <property type="glycosylation" value="2 sites, 1 O-linked glycan (1 site)"/>
</dbReference>
<dbReference type="iPTMnet" id="Q9R233"/>
<dbReference type="PhosphoSitePlus" id="Q9R233"/>
<dbReference type="jPOST" id="Q9R233"/>
<dbReference type="PaxDb" id="10090-ENSMUSP00000025161"/>
<dbReference type="PeptideAtlas" id="Q9R233"/>
<dbReference type="ProteomicsDB" id="259075">
    <molecule id="Q9R233-1"/>
</dbReference>
<dbReference type="ProteomicsDB" id="259076">
    <molecule id="Q9R233-2"/>
</dbReference>
<dbReference type="Pumba" id="Q9R233"/>
<dbReference type="Antibodypedia" id="45647">
    <property type="antibodies" value="206 antibodies from 30 providers"/>
</dbReference>
<dbReference type="DNASU" id="21356"/>
<dbReference type="Ensembl" id="ENSMUST00000234247.2">
    <molecule id="Q9R233-1"/>
    <property type="protein sequence ID" value="ENSMUSP00000157315.2"/>
    <property type="gene ID" value="ENSMUSG00000024308.16"/>
</dbReference>
<dbReference type="GeneID" id="21356"/>
<dbReference type="KEGG" id="mmu:21356"/>
<dbReference type="UCSC" id="uc008cae.1">
    <molecule id="Q9R233-1"/>
    <property type="organism name" value="mouse"/>
</dbReference>
<dbReference type="AGR" id="MGI:1201689"/>
<dbReference type="CTD" id="6892"/>
<dbReference type="MGI" id="MGI:1201689">
    <property type="gene designation" value="Tapbp"/>
</dbReference>
<dbReference type="VEuPathDB" id="HostDB:ENSMUSG00000024308"/>
<dbReference type="eggNOG" id="ENOG502QR0A">
    <property type="taxonomic scope" value="Eukaryota"/>
</dbReference>
<dbReference type="GeneTree" id="ENSGT00940000159200"/>
<dbReference type="InParanoid" id="Q9R233"/>
<dbReference type="OrthoDB" id="8929156at2759"/>
<dbReference type="PhylomeDB" id="Q9R233"/>
<dbReference type="Reactome" id="R-MMU-1236974">
    <property type="pathway name" value="ER-Phagosome pathway"/>
</dbReference>
<dbReference type="Reactome" id="R-MMU-983170">
    <property type="pathway name" value="Antigen Presentation: Folding, assembly and peptide loading of class I MHC"/>
</dbReference>
<dbReference type="BioGRID-ORCS" id="21356">
    <property type="hits" value="22 hits in 81 CRISPR screens"/>
</dbReference>
<dbReference type="ChiTaRS" id="Tapbp">
    <property type="organism name" value="mouse"/>
</dbReference>
<dbReference type="PRO" id="PR:Q9R233"/>
<dbReference type="Proteomes" id="UP000000589">
    <property type="component" value="Chromosome 17"/>
</dbReference>
<dbReference type="RNAct" id="Q9R233">
    <property type="molecule type" value="protein"/>
</dbReference>
<dbReference type="Bgee" id="ENSMUSG00000024308">
    <property type="expression patterns" value="Expressed in peripheral lymph node and 254 other cell types or tissues"/>
</dbReference>
<dbReference type="ExpressionAtlas" id="Q9R233">
    <property type="expression patterns" value="baseline and differential"/>
</dbReference>
<dbReference type="GO" id="GO:0030670">
    <property type="term" value="C:phagocytic vesicle membrane"/>
    <property type="evidence" value="ECO:0000304"/>
    <property type="project" value="Reactome"/>
</dbReference>
<dbReference type="GO" id="GO:0005886">
    <property type="term" value="C:plasma membrane"/>
    <property type="evidence" value="ECO:0000304"/>
    <property type="project" value="MGI"/>
</dbReference>
<dbReference type="GO" id="GO:0061779">
    <property type="term" value="C:Tapasin-ERp57 complex"/>
    <property type="evidence" value="ECO:0000266"/>
    <property type="project" value="ComplexPortal"/>
</dbReference>
<dbReference type="GO" id="GO:0042605">
    <property type="term" value="F:peptide antigen binding"/>
    <property type="evidence" value="ECO:0000304"/>
    <property type="project" value="UniProt"/>
</dbReference>
<dbReference type="GO" id="GO:0019885">
    <property type="term" value="P:antigen processing and presentation of endogenous peptide antigen via MHC class I"/>
    <property type="evidence" value="ECO:0007669"/>
    <property type="project" value="InterPro"/>
</dbReference>
<dbReference type="GO" id="GO:0002479">
    <property type="term" value="P:antigen processing and presentation of exogenous peptide antigen via MHC class I, TAP-dependent"/>
    <property type="evidence" value="ECO:0000314"/>
    <property type="project" value="MGI"/>
</dbReference>
<dbReference type="GO" id="GO:0006952">
    <property type="term" value="P:defense response"/>
    <property type="evidence" value="ECO:0000315"/>
    <property type="project" value="MGI"/>
</dbReference>
<dbReference type="GO" id="GO:0002502">
    <property type="term" value="P:peptide antigen assembly with MHC class I protein complex"/>
    <property type="evidence" value="ECO:0000266"/>
    <property type="project" value="ComplexPortal"/>
</dbReference>
<dbReference type="GO" id="GO:0050823">
    <property type="term" value="P:peptide antigen stabilization"/>
    <property type="evidence" value="ECO:0000315"/>
    <property type="project" value="UniProtKB"/>
</dbReference>
<dbReference type="FunFam" id="2.60.40.10:FF:000924">
    <property type="entry name" value="TAP binding protein"/>
    <property type="match status" value="1"/>
</dbReference>
<dbReference type="Gene3D" id="2.60.40.10">
    <property type="entry name" value="Immunoglobulins"/>
    <property type="match status" value="3"/>
</dbReference>
<dbReference type="InterPro" id="IPR007110">
    <property type="entry name" value="Ig-like_dom"/>
</dbReference>
<dbReference type="InterPro" id="IPR036179">
    <property type="entry name" value="Ig-like_dom_sf"/>
</dbReference>
<dbReference type="InterPro" id="IPR013783">
    <property type="entry name" value="Ig-like_fold"/>
</dbReference>
<dbReference type="InterPro" id="IPR003006">
    <property type="entry name" value="Ig/MHC_CS"/>
</dbReference>
<dbReference type="InterPro" id="IPR003597">
    <property type="entry name" value="Ig_C1-set"/>
</dbReference>
<dbReference type="InterPro" id="IPR050380">
    <property type="entry name" value="Immune_Resp_Modulators"/>
</dbReference>
<dbReference type="InterPro" id="IPR008056">
    <property type="entry name" value="Tapasin"/>
</dbReference>
<dbReference type="PANTHER" id="PTHR23411">
    <property type="entry name" value="TAPASIN"/>
    <property type="match status" value="1"/>
</dbReference>
<dbReference type="Pfam" id="PF07654">
    <property type="entry name" value="C1-set"/>
    <property type="match status" value="1"/>
</dbReference>
<dbReference type="PRINTS" id="PR01669">
    <property type="entry name" value="TAPASIN"/>
</dbReference>
<dbReference type="SUPFAM" id="SSF48726">
    <property type="entry name" value="Immunoglobulin"/>
    <property type="match status" value="1"/>
</dbReference>
<dbReference type="PROSITE" id="PS50835">
    <property type="entry name" value="IG_LIKE"/>
    <property type="match status" value="1"/>
</dbReference>
<dbReference type="PROSITE" id="PS00290">
    <property type="entry name" value="IG_MHC"/>
    <property type="match status" value="1"/>
</dbReference>
<protein>
    <recommendedName>
        <fullName>Tapasin</fullName>
        <shortName>TPN</shortName>
        <shortName>TPSN</shortName>
    </recommendedName>
    <alternativeName>
        <fullName>TAP-associated protein</fullName>
    </alternativeName>
    <alternativeName>
        <fullName>TAP-binding protein</fullName>
    </alternativeName>
</protein>
<accession>Q9R233</accession>
<accession>O70317</accession>
<accession>Q91YE0</accession>
<accession>Q91YE1</accession>
<accession>Q9QWT7</accession>
<accession>Q9Z1W3</accession>
<gene>
    <name type="primary">Tapbp</name>
    <name type="synonym">Tapa</name>
</gene>
<keyword id="KW-0002">3D-structure</keyword>
<keyword id="KW-0025">Alternative splicing</keyword>
<keyword id="KW-1015">Disulfide bond</keyword>
<keyword id="KW-0256">Endoplasmic reticulum</keyword>
<keyword id="KW-0325">Glycoprotein</keyword>
<keyword id="KW-0393">Immunoglobulin domain</keyword>
<keyword id="KW-0472">Membrane</keyword>
<keyword id="KW-1185">Reference proteome</keyword>
<keyword id="KW-0732">Signal</keyword>
<keyword id="KW-0812">Transmembrane</keyword>
<keyword id="KW-1133">Transmembrane helix</keyword>
<reference key="1">
    <citation type="journal article" date="1999" name="J. Biol. Chem.">
        <title>Peptide-bound major histocompatibility complex class I molecules associate with tapasin before dissociation from transporter associated with antigen processing.</title>
        <authorList>
            <person name="Li S."/>
            <person name="Paulsson K.M."/>
            <person name="Sjoegren H.-O."/>
            <person name="Wang P."/>
        </authorList>
    </citation>
    <scope>NUCLEOTIDE SEQUENCE [MRNA] (ISOFORM LONG)</scope>
    <source>
        <tissue>Liver</tissue>
    </source>
</reference>
<reference key="2">
    <citation type="submission" date="1998-12" db="EMBL/GenBank/DDBJ databases">
        <title>Sequence of the mouse major histocomaptibility locus class II region.</title>
        <authorList>
            <person name="Rowen L."/>
            <person name="Qin S."/>
            <person name="Madan A."/>
            <person name="Loretz C."/>
            <person name="Hall J."/>
            <person name="James R."/>
            <person name="Dors M."/>
            <person name="Shaffer T."/>
            <person name="Abbasi N."/>
            <person name="Ratcliffe A."/>
            <person name="Dickhoff R."/>
            <person name="Lasky S."/>
            <person name="Hood L."/>
        </authorList>
    </citation>
    <scope>NUCLEOTIDE SEQUENCE (ISOFORMS LONG AND SHORT)</scope>
    <source>
        <strain>129</strain>
    </source>
</reference>
<reference key="3">
    <citation type="journal article" date="1998" name="Immunogenetics">
        <title>Sequence, linkage to H2-K, and function of mouse tapasin in MHC class I assembly.</title>
        <authorList>
            <person name="Grandea A.G. III"/>
            <person name="Comber P.G."/>
            <person name="Wenderfer S.E."/>
            <person name="Schoenhals G."/>
            <person name="Frueh K."/>
            <person name="Monaco J.J."/>
            <person name="Spies T."/>
        </authorList>
    </citation>
    <scope>NUCLEOTIDE SEQUENCE [MRNA] (ISOFORM LONG)</scope>
</reference>
<reference key="4">
    <citation type="journal article" date="2002" name="Immunol. Lett.">
        <title>Regulation of the expression of mouse TAP-associated glycoprotein (tapasin) by cytokines.</title>
        <authorList>
            <person name="Abarca-Heidemann K."/>
            <person name="Friederichs S."/>
            <person name="Klamp T."/>
            <person name="Boehm U."/>
            <person name="Guethlein L.A."/>
            <person name="Ortmann B."/>
        </authorList>
    </citation>
    <scope>NUCLEOTIDE SEQUENCE (ISOFORM LONG)</scope>
    <source>
        <strain>C57BL/10</strain>
    </source>
</reference>
<reference key="5">
    <citation type="journal article" date="2010" name="Cell">
        <title>A tissue-specific atlas of mouse protein phosphorylation and expression.</title>
        <authorList>
            <person name="Huttlin E.L."/>
            <person name="Jedrychowski M.P."/>
            <person name="Elias J.E."/>
            <person name="Goswami T."/>
            <person name="Rad R."/>
            <person name="Beausoleil S.A."/>
            <person name="Villen J."/>
            <person name="Haas W."/>
            <person name="Sowa M.E."/>
            <person name="Gygi S.P."/>
        </authorList>
    </citation>
    <scope>IDENTIFICATION BY MASS SPECTROMETRY [LARGE SCALE ANALYSIS]</scope>
    <source>
        <tissue>Liver</tissue>
        <tissue>Lung</tissue>
        <tissue>Spleen</tissue>
    </source>
</reference>
<proteinExistence type="evidence at protein level"/>
<sequence>MKPLLLLVAVALGLATVVSVVSAGPEAIECWFVEDAGGGGLSKKPATLLLRHGPRGPPPRPDLDPKLYFKVDDPAGMLLAAFRRYPAGASAPHCEMSRFIPFPASAKWARSLSPEQNCPRALDGDWLLVSVSSTLFSLSSLLRPQPEPLREPVVITMATVVLTVLTHNPAPRVQLGKDAVLDLRFAYAPSALEGSPSLDAGPPPFGLEWRRQHRGKGHLLLAATPGLAGRMPPAQEKATAFAAWDDDEPWGPWTGNGTFWLPAVKPSQEGVYLATVHLPYLQGQVSLELTVHKAPRVSLTPAPVVWAAPGEAPPELLCLASHFFPAEGLEVKWELRGGPGGSSRKVEGKTWLSTIRHHSDGSVSQSGHLQLPPVTAKQHGVHYVCRVYHSSLPASGRSADVTLEVAGFSGPSIEDGIGLFLSAFLLLGLLKVLGWLAAYWTIPEVSKEKATAASLTIPRNSKKSQ</sequence>
<evidence type="ECO:0000250" key="1"/>
<evidence type="ECO:0000250" key="2">
    <source>
        <dbReference type="UniProtKB" id="O15533"/>
    </source>
</evidence>
<evidence type="ECO:0000255" key="3"/>
<evidence type="ECO:0000255" key="4">
    <source>
        <dbReference type="PROSITE-ProRule" id="PRU00114"/>
    </source>
</evidence>
<evidence type="ECO:0000305" key="5"/>
<name>TPSN_MOUSE</name>